<keyword id="KW-0966">Cell projection</keyword>
<keyword id="KW-1015">Disulfide bond</keyword>
<keyword id="KW-0256">Endoplasmic reticulum</keyword>
<keyword id="KW-0325">Glycoprotein</keyword>
<keyword id="KW-0393">Immunoglobulin domain</keyword>
<keyword id="KW-0433">Leucine-rich repeat</keyword>
<keyword id="KW-0472">Membrane</keyword>
<keyword id="KW-1185">Reference proteome</keyword>
<keyword id="KW-0677">Repeat</keyword>
<keyword id="KW-0716">Sensory transduction</keyword>
<keyword id="KW-0732">Signal</keyword>
<keyword id="KW-0812">Transmembrane</keyword>
<keyword id="KW-1133">Transmembrane helix</keyword>
<keyword id="KW-0844">Vision</keyword>
<feature type="signal peptide" evidence="2">
    <location>
        <begin position="1"/>
        <end position="21"/>
    </location>
</feature>
<feature type="chain" id="PRO_0000014837" description="Leucine-rich repeat, immunoglobulin-like domain and transmembrane domain-containing protein 1">
    <location>
        <begin position="22"/>
        <end position="623"/>
    </location>
</feature>
<feature type="topological domain" description="Lumenal" evidence="2">
    <location>
        <begin position="22"/>
        <end position="526"/>
    </location>
</feature>
<feature type="transmembrane region" description="Helical" evidence="2">
    <location>
        <begin position="527"/>
        <end position="547"/>
    </location>
</feature>
<feature type="topological domain" description="Cytoplasmic" evidence="2">
    <location>
        <begin position="548"/>
        <end position="623"/>
    </location>
</feature>
<feature type="domain" description="LRRNT">
    <location>
        <begin position="22"/>
        <end position="59"/>
    </location>
</feature>
<feature type="repeat" description="LRR 1">
    <location>
        <begin position="60"/>
        <end position="81"/>
    </location>
</feature>
<feature type="repeat" description="LRR 2">
    <location>
        <begin position="84"/>
        <end position="105"/>
    </location>
</feature>
<feature type="repeat" description="LRR 3">
    <location>
        <begin position="108"/>
        <end position="128"/>
    </location>
</feature>
<feature type="repeat" description="LRR 4">
    <location>
        <begin position="132"/>
        <end position="153"/>
    </location>
</feature>
<feature type="repeat" description="LRR 5">
    <location>
        <begin position="156"/>
        <end position="177"/>
    </location>
</feature>
<feature type="domain" description="LRRCT">
    <location>
        <begin position="201"/>
        <end position="253"/>
    </location>
</feature>
<feature type="domain" description="Ig-like C2-type">
    <location>
        <begin position="266"/>
        <end position="332"/>
    </location>
</feature>
<feature type="domain" description="Fibronectin type-III" evidence="4">
    <location>
        <begin position="430"/>
        <end position="518"/>
    </location>
</feature>
<feature type="repeat" description="LRR 6">
    <location>
        <begin position="525"/>
        <end position="548"/>
    </location>
</feature>
<feature type="glycosylation site" description="N-linked (GlcNAc...) asparagine" evidence="2">
    <location>
        <position position="156"/>
    </location>
</feature>
<feature type="glycosylation site" description="N-linked (GlcNAc...) asparagine" evidence="2">
    <location>
        <position position="296"/>
    </location>
</feature>
<feature type="glycosylation site" description="N-linked (GlcNAc...) asparagine" evidence="2">
    <location>
        <position position="455"/>
    </location>
</feature>
<feature type="disulfide bond" evidence="3">
    <location>
        <begin position="275"/>
        <end position="328"/>
    </location>
</feature>
<dbReference type="EMBL" id="AB028461">
    <property type="protein sequence ID" value="BAA95680.1"/>
    <property type="status" value="ALT_INIT"/>
    <property type="molecule type" value="mRNA"/>
</dbReference>
<dbReference type="RefSeq" id="NP_647547.2">
    <property type="nucleotide sequence ID" value="NM_139331.2"/>
</dbReference>
<dbReference type="SMR" id="Q9JMH2"/>
<dbReference type="STRING" id="10116.ENSRNOP00000017773"/>
<dbReference type="GlyCosmos" id="Q9JMH2">
    <property type="glycosylation" value="3 sites, No reported glycans"/>
</dbReference>
<dbReference type="GlyGen" id="Q9JMH2">
    <property type="glycosylation" value="3 sites"/>
</dbReference>
<dbReference type="PhosphoSitePlus" id="Q9JMH2"/>
<dbReference type="PaxDb" id="10116-ENSRNOP00000017773"/>
<dbReference type="Ensembl" id="ENSRNOT00000017773.3">
    <property type="protein sequence ID" value="ENSRNOP00000017773.3"/>
    <property type="gene ID" value="ENSRNOG00000012790.3"/>
</dbReference>
<dbReference type="GeneID" id="246214"/>
<dbReference type="KEGG" id="rno:246214"/>
<dbReference type="UCSC" id="RGD:628607">
    <property type="organism name" value="rat"/>
</dbReference>
<dbReference type="AGR" id="RGD:628607"/>
<dbReference type="CTD" id="26103"/>
<dbReference type="RGD" id="628607">
    <property type="gene designation" value="Lrit1"/>
</dbReference>
<dbReference type="eggNOG" id="KOG0619">
    <property type="taxonomic scope" value="Eukaryota"/>
</dbReference>
<dbReference type="eggNOG" id="KOG3510">
    <property type="taxonomic scope" value="Eukaryota"/>
</dbReference>
<dbReference type="GeneTree" id="ENSGT00940000156033"/>
<dbReference type="HOGENOM" id="CLU_019650_0_0_1"/>
<dbReference type="InParanoid" id="Q9JMH2"/>
<dbReference type="OMA" id="IVCVCVK"/>
<dbReference type="OrthoDB" id="9229163at2759"/>
<dbReference type="PhylomeDB" id="Q9JMH2"/>
<dbReference type="TreeFam" id="TF330861"/>
<dbReference type="PRO" id="PR:Q9JMH2"/>
<dbReference type="Proteomes" id="UP000002494">
    <property type="component" value="Chromosome 16"/>
</dbReference>
<dbReference type="GO" id="GO:0030425">
    <property type="term" value="C:dendrite"/>
    <property type="evidence" value="ECO:0007669"/>
    <property type="project" value="UniProtKB-SubCell"/>
</dbReference>
<dbReference type="GO" id="GO:0005789">
    <property type="term" value="C:endoplasmic reticulum membrane"/>
    <property type="evidence" value="ECO:0000314"/>
    <property type="project" value="UniProtKB"/>
</dbReference>
<dbReference type="GO" id="GO:0045202">
    <property type="term" value="C:synapse"/>
    <property type="evidence" value="ECO:0007669"/>
    <property type="project" value="Ensembl"/>
</dbReference>
<dbReference type="GO" id="GO:0043083">
    <property type="term" value="C:synaptic cleft"/>
    <property type="evidence" value="ECO:0007669"/>
    <property type="project" value="Ensembl"/>
</dbReference>
<dbReference type="GO" id="GO:0007602">
    <property type="term" value="P:phototransduction"/>
    <property type="evidence" value="ECO:0007669"/>
    <property type="project" value="Ensembl"/>
</dbReference>
<dbReference type="GO" id="GO:0099536">
    <property type="term" value="P:synaptic signaling"/>
    <property type="evidence" value="ECO:0007669"/>
    <property type="project" value="Ensembl"/>
</dbReference>
<dbReference type="GO" id="GO:0007601">
    <property type="term" value="P:visual perception"/>
    <property type="evidence" value="ECO:0007669"/>
    <property type="project" value="UniProtKB-KW"/>
</dbReference>
<dbReference type="CDD" id="cd00063">
    <property type="entry name" value="FN3"/>
    <property type="match status" value="1"/>
</dbReference>
<dbReference type="FunFam" id="3.80.10.10:FF:000058">
    <property type="entry name" value="immunoglobulin superfamily containing leucine-rich repeat protein 2"/>
    <property type="match status" value="1"/>
</dbReference>
<dbReference type="FunFam" id="2.60.40.10:FF:000744">
    <property type="entry name" value="Leucine rich repeat, Ig-like and transmembrane domains 1"/>
    <property type="match status" value="1"/>
</dbReference>
<dbReference type="FunFam" id="2.60.40.10:FF:000928">
    <property type="entry name" value="Leucine rich repeat, Ig-like and transmembrane domains 1"/>
    <property type="match status" value="1"/>
</dbReference>
<dbReference type="Gene3D" id="2.60.40.10">
    <property type="entry name" value="Immunoglobulins"/>
    <property type="match status" value="2"/>
</dbReference>
<dbReference type="Gene3D" id="3.80.10.10">
    <property type="entry name" value="Ribonuclease Inhibitor"/>
    <property type="match status" value="1"/>
</dbReference>
<dbReference type="InterPro" id="IPR000483">
    <property type="entry name" value="Cys-rich_flank_reg_C"/>
</dbReference>
<dbReference type="InterPro" id="IPR003961">
    <property type="entry name" value="FN3_dom"/>
</dbReference>
<dbReference type="InterPro" id="IPR036116">
    <property type="entry name" value="FN3_sf"/>
</dbReference>
<dbReference type="InterPro" id="IPR007110">
    <property type="entry name" value="Ig-like_dom"/>
</dbReference>
<dbReference type="InterPro" id="IPR036179">
    <property type="entry name" value="Ig-like_dom_sf"/>
</dbReference>
<dbReference type="InterPro" id="IPR013783">
    <property type="entry name" value="Ig-like_fold"/>
</dbReference>
<dbReference type="InterPro" id="IPR013098">
    <property type="entry name" value="Ig_I-set"/>
</dbReference>
<dbReference type="InterPro" id="IPR003599">
    <property type="entry name" value="Ig_sub"/>
</dbReference>
<dbReference type="InterPro" id="IPR003598">
    <property type="entry name" value="Ig_sub2"/>
</dbReference>
<dbReference type="InterPro" id="IPR001611">
    <property type="entry name" value="Leu-rich_rpt"/>
</dbReference>
<dbReference type="InterPro" id="IPR003591">
    <property type="entry name" value="Leu-rich_rpt_typical-subtyp"/>
</dbReference>
<dbReference type="InterPro" id="IPR050467">
    <property type="entry name" value="LRFN"/>
</dbReference>
<dbReference type="InterPro" id="IPR032675">
    <property type="entry name" value="LRR_dom_sf"/>
</dbReference>
<dbReference type="InterPro" id="IPR000372">
    <property type="entry name" value="LRRNT"/>
</dbReference>
<dbReference type="PANTHER" id="PTHR45842:SF9">
    <property type="entry name" value="LEUCINE-RICH REPEAT, IMMUNOGLOBULIN-LIKE DOMAIN AND TRANSMEMBRANE DOMAIN-CONTAINING PROTEIN 1"/>
    <property type="match status" value="1"/>
</dbReference>
<dbReference type="PANTHER" id="PTHR45842">
    <property type="entry name" value="SYNAPTIC ADHESION-LIKE MOLECULE SALM"/>
    <property type="match status" value="1"/>
</dbReference>
<dbReference type="Pfam" id="PF00041">
    <property type="entry name" value="fn3"/>
    <property type="match status" value="1"/>
</dbReference>
<dbReference type="Pfam" id="PF07679">
    <property type="entry name" value="I-set"/>
    <property type="match status" value="1"/>
</dbReference>
<dbReference type="Pfam" id="PF13855">
    <property type="entry name" value="LRR_8"/>
    <property type="match status" value="1"/>
</dbReference>
<dbReference type="PRINTS" id="PR00019">
    <property type="entry name" value="LEURICHRPT"/>
</dbReference>
<dbReference type="SMART" id="SM00409">
    <property type="entry name" value="IG"/>
    <property type="match status" value="1"/>
</dbReference>
<dbReference type="SMART" id="SM00408">
    <property type="entry name" value="IGc2"/>
    <property type="match status" value="1"/>
</dbReference>
<dbReference type="SMART" id="SM00369">
    <property type="entry name" value="LRR_TYP"/>
    <property type="match status" value="4"/>
</dbReference>
<dbReference type="SMART" id="SM00082">
    <property type="entry name" value="LRRCT"/>
    <property type="match status" value="1"/>
</dbReference>
<dbReference type="SMART" id="SM00013">
    <property type="entry name" value="LRRNT"/>
    <property type="match status" value="1"/>
</dbReference>
<dbReference type="SUPFAM" id="SSF49265">
    <property type="entry name" value="Fibronectin type III"/>
    <property type="match status" value="1"/>
</dbReference>
<dbReference type="SUPFAM" id="SSF48726">
    <property type="entry name" value="Immunoglobulin"/>
    <property type="match status" value="1"/>
</dbReference>
<dbReference type="SUPFAM" id="SSF52058">
    <property type="entry name" value="L domain-like"/>
    <property type="match status" value="1"/>
</dbReference>
<dbReference type="PROSITE" id="PS50853">
    <property type="entry name" value="FN3"/>
    <property type="match status" value="1"/>
</dbReference>
<dbReference type="PROSITE" id="PS50835">
    <property type="entry name" value="IG_LIKE"/>
    <property type="match status" value="1"/>
</dbReference>
<dbReference type="PROSITE" id="PS51450">
    <property type="entry name" value="LRR"/>
    <property type="match status" value="4"/>
</dbReference>
<comment type="function">
    <text evidence="1">Photoreceptor synaptic protein essential for normal vision (By similarity). Involved in synapse formation in cone photoreceptor cells (By similarity).</text>
</comment>
<comment type="subunit">
    <text evidence="1 5">Homodimer (PubMed:10777785). Interacts with LRIT2; may form a heterodimer with LRIT2 (By similarity). Interacts (via its N-terminal extracellular domain) with metabotropic glutamate receptor GRM6 (By similarity). Interacts (via its extreme C-terminus) with the scaffold protein FRMPD2 (via the third PDZ domain); the interaction leads to their colocalization in photoreceptor synapses (By similarity).</text>
</comment>
<comment type="subcellular location">
    <subcellularLocation>
        <location evidence="5">Endoplasmic reticulum membrane</location>
        <topology evidence="5">Single-pass type I membrane protein</topology>
    </subcellularLocation>
    <subcellularLocation>
        <location evidence="1">Cell projection</location>
        <location evidence="1">Dendrite</location>
    </subcellularLocation>
</comment>
<comment type="tissue specificity">
    <text evidence="5">Retina, outer segments of photoreceptor cells.</text>
</comment>
<comment type="developmental stage">
    <text evidence="5">No expression at 1 day old. Expressed at 7 days old, increased expression at 14 and 56 days old.</text>
</comment>
<comment type="sequence caution" evidence="6">
    <conflict type="erroneous initiation">
        <sequence resource="EMBL-CDS" id="BAA95680"/>
    </conflict>
</comment>
<gene>
    <name type="primary">Lrit1</name>
    <name type="synonym">Lrrc21</name>
    <name type="synonym">Pal</name>
</gene>
<protein>
    <recommendedName>
        <fullName>Leucine-rich repeat, immunoglobulin-like domain and transmembrane domain-containing protein 1</fullName>
    </recommendedName>
    <alternativeName>
        <fullName>Leucine-rich repeat-containing protein 21</fullName>
    </alternativeName>
    <alternativeName>
        <fullName>Photoreceptor-associated LRR superfamily protein</fullName>
    </alternativeName>
    <alternativeName>
        <fullName>Retina-specific protein PAL</fullName>
    </alternativeName>
</protein>
<accession>Q9JMH2</accession>
<reference evidence="6" key="1">
    <citation type="journal article" date="2000" name="J. Neurosci.">
        <title>Molecular cloning of a novel membrane glycoprotein, Pal, specifically expressed in photoreceptor cells of the retina and containing leucine-rich repeat.</title>
        <authorList>
            <person name="Gomi F."/>
            <person name="Imaizumi K."/>
            <person name="Yoneda T."/>
            <person name="Taniguchi M."/>
            <person name="Mori Y."/>
            <person name="Miyoshi K."/>
            <person name="Hitomi J."/>
            <person name="Fujikado T."/>
            <person name="Tano Y."/>
            <person name="Tohyama M."/>
        </authorList>
    </citation>
    <scope>NUCLEOTIDE SEQUENCE [MRNA]</scope>
    <scope>SUBUNIT</scope>
    <scope>SUBCELLULAR LOCATION</scope>
    <scope>TISSUE SPECIFICITY</scope>
    <scope>DEVELOPMENTAL STAGE</scope>
    <source>
        <tissue evidence="7">Retina</tissue>
    </source>
</reference>
<proteinExistence type="evidence at protein level"/>
<name>LRIT1_RAT</name>
<organism evidence="7">
    <name type="scientific">Rattus norvegicus</name>
    <name type="common">Rat</name>
    <dbReference type="NCBI Taxonomy" id="10116"/>
    <lineage>
        <taxon>Eukaryota</taxon>
        <taxon>Metazoa</taxon>
        <taxon>Chordata</taxon>
        <taxon>Craniata</taxon>
        <taxon>Vertebrata</taxon>
        <taxon>Euteleostomi</taxon>
        <taxon>Mammalia</taxon>
        <taxon>Eutheria</taxon>
        <taxon>Euarchontoglires</taxon>
        <taxon>Glires</taxon>
        <taxon>Rodentia</taxon>
        <taxon>Myomorpha</taxon>
        <taxon>Muroidea</taxon>
        <taxon>Muridae</taxon>
        <taxon>Murinae</taxon>
        <taxon>Rattus</taxon>
    </lineage>
</organism>
<sequence>MWVALGMLWLLALGGPHQAWSFCPSQCSCSLHILSDGSKARTVVCSDPDLTLPPASIPPDTCKLRLERTAIRRVPGETFRPLSRLEQLWLPYNALSELSTLMLRGLRRLRELRLPGNHLVTFPWAALKDTPQLQLLDLQANRLSTLPPEAVHFLENLTFLDLSNNQLMRLPEELLDTWAHLKTGPYLSSRRTRLVLGLQDNPWVCDCRLYDLVHLLDGWASNLIFIEARLRCGSPRSLAGVAFSQLELRKCQSPELRPGVTSIISPLGSTVLLRCGATGIPGPEMSWRRANGRPLNGTVHQEVSSDGSSWTLLDLPVVSLFDSGDYICQAKNFLGASETLISLIVTEPQTSTEYTGIPGALWARTGEGAEAAAYNNKLVARHVPHVPEPVALATKPSVPSIKEELPLQNFQMDVPGEFSREPSEHQETQMVRSLKVVGDTYHSVSLVWKAPQAGNTTAFSVLYAVFGQRDMRRMTVEAGKTSVTIEGLAPKTKYVACVCVRGLVPTKEQCVIFSTDEVVDAEGTQRLINMVVISVAAIIALPPTLLVCCGALRRRCHKCRAGGSAEASGAYVNLERLGHSEDGSEELSRSSLSEADRLLSARSSLDSQVLGVRGGRRINEYFC</sequence>
<evidence type="ECO:0000250" key="1">
    <source>
        <dbReference type="UniProtKB" id="Q8K099"/>
    </source>
</evidence>
<evidence type="ECO:0000255" key="2"/>
<evidence type="ECO:0000255" key="3">
    <source>
        <dbReference type="PROSITE-ProRule" id="PRU00114"/>
    </source>
</evidence>
<evidence type="ECO:0000255" key="4">
    <source>
        <dbReference type="PROSITE-ProRule" id="PRU00316"/>
    </source>
</evidence>
<evidence type="ECO:0000269" key="5">
    <source>
    </source>
</evidence>
<evidence type="ECO:0000305" key="6"/>
<evidence type="ECO:0000312" key="7">
    <source>
        <dbReference type="EMBL" id="BAA95680.1"/>
    </source>
</evidence>